<sequence length="307" mass="33982">MDRCCQRATAFACALRPTKLIDYEEMFRGAMQARAMVANPDQWADSDRDQVNTRHYLSTSMRVALDRGEFFLVYQPIIRLADNRIIGAEALLRWEHPTLGTLLPGRFIDRAENNGLMVPLTAFVLEQACRHVRSWRDHSTDPQPFVSVNVSASTICDPGFLVLVEGVLGETGLPAHALQLELAEDARLSRDEKAVTRLQELSALGVGIAIDDFGIGFSSLAYLPRLPVDVVKLGGKFIECLDGDIQARLANEQITRAMIDLGDKLGITVTAKLVETPSQAARLRAFGCKAAQGWHFAKALPVDFFRE</sequence>
<organism>
    <name type="scientific">Mycobacterium bovis (strain ATCC BAA-935 / AF2122/97)</name>
    <dbReference type="NCBI Taxonomy" id="233413"/>
    <lineage>
        <taxon>Bacteria</taxon>
        <taxon>Bacillati</taxon>
        <taxon>Actinomycetota</taxon>
        <taxon>Actinomycetes</taxon>
        <taxon>Mycobacteriales</taxon>
        <taxon>Mycobacteriaceae</taxon>
        <taxon>Mycobacterium</taxon>
        <taxon>Mycobacterium tuberculosis complex</taxon>
    </lineage>
</organism>
<comment type="subcellular location">
    <subcellularLocation>
        <location evidence="3">Cell membrane</location>
        <topology evidence="3">Multi-pass membrane protein</topology>
    </subcellularLocation>
</comment>
<name>Y1392_MYCBO</name>
<keyword id="KW-1003">Cell membrane</keyword>
<keyword id="KW-0472">Membrane</keyword>
<keyword id="KW-1185">Reference proteome</keyword>
<keyword id="KW-0812">Transmembrane</keyword>
<keyword id="KW-1133">Transmembrane helix</keyword>
<proteinExistence type="predicted"/>
<gene>
    <name type="ordered locus">BQ2027_MB1392C</name>
</gene>
<dbReference type="EMBL" id="LT708304">
    <property type="protein sequence ID" value="SIT99995.1"/>
    <property type="molecule type" value="Genomic_DNA"/>
</dbReference>
<dbReference type="RefSeq" id="NP_855046.1">
    <property type="nucleotide sequence ID" value="NC_002945.3"/>
</dbReference>
<dbReference type="RefSeq" id="WP_003406987.1">
    <property type="nucleotide sequence ID" value="NC_002945.4"/>
</dbReference>
<dbReference type="SMR" id="P64830"/>
<dbReference type="KEGG" id="mbo:BQ2027_MB1392C"/>
<dbReference type="PATRIC" id="fig|233413.5.peg.1524"/>
<dbReference type="Proteomes" id="UP000001419">
    <property type="component" value="Chromosome"/>
</dbReference>
<dbReference type="GO" id="GO:0005886">
    <property type="term" value="C:plasma membrane"/>
    <property type="evidence" value="ECO:0007669"/>
    <property type="project" value="UniProtKB-SubCell"/>
</dbReference>
<dbReference type="GO" id="GO:0071111">
    <property type="term" value="F:cyclic-guanylate-specific phosphodiesterase activity"/>
    <property type="evidence" value="ECO:0007669"/>
    <property type="project" value="InterPro"/>
</dbReference>
<dbReference type="CDD" id="cd01948">
    <property type="entry name" value="EAL"/>
    <property type="match status" value="1"/>
</dbReference>
<dbReference type="Gene3D" id="3.20.20.450">
    <property type="entry name" value="EAL domain"/>
    <property type="match status" value="1"/>
</dbReference>
<dbReference type="InterPro" id="IPR050706">
    <property type="entry name" value="Cyclic-di-GMP_PDE-like"/>
</dbReference>
<dbReference type="InterPro" id="IPR001633">
    <property type="entry name" value="EAL_dom"/>
</dbReference>
<dbReference type="InterPro" id="IPR035919">
    <property type="entry name" value="EAL_sf"/>
</dbReference>
<dbReference type="PANTHER" id="PTHR33121">
    <property type="entry name" value="CYCLIC DI-GMP PHOSPHODIESTERASE PDEF"/>
    <property type="match status" value="1"/>
</dbReference>
<dbReference type="PANTHER" id="PTHR33121:SF70">
    <property type="entry name" value="SIGNALING PROTEIN YKOW"/>
    <property type="match status" value="1"/>
</dbReference>
<dbReference type="Pfam" id="PF00563">
    <property type="entry name" value="EAL"/>
    <property type="match status" value="1"/>
</dbReference>
<dbReference type="SMART" id="SM00052">
    <property type="entry name" value="EAL"/>
    <property type="match status" value="1"/>
</dbReference>
<dbReference type="SUPFAM" id="SSF141868">
    <property type="entry name" value="EAL domain-like"/>
    <property type="match status" value="1"/>
</dbReference>
<dbReference type="PROSITE" id="PS50883">
    <property type="entry name" value="EAL"/>
    <property type="match status" value="1"/>
</dbReference>
<accession>P64830</accession>
<accession>A0A1R3XY51</accession>
<accession>Q11027</accession>
<accession>X2BHN5</accession>
<reference key="1">
    <citation type="journal article" date="2003" name="Proc. Natl. Acad. Sci. U.S.A.">
        <title>The complete genome sequence of Mycobacterium bovis.</title>
        <authorList>
            <person name="Garnier T."/>
            <person name="Eiglmeier K."/>
            <person name="Camus J.-C."/>
            <person name="Medina N."/>
            <person name="Mansoor H."/>
            <person name="Pryor M."/>
            <person name="Duthoy S."/>
            <person name="Grondin S."/>
            <person name="Lacroix C."/>
            <person name="Monsempe C."/>
            <person name="Simon S."/>
            <person name="Harris B."/>
            <person name="Atkin R."/>
            <person name="Doggett J."/>
            <person name="Mayes R."/>
            <person name="Keating L."/>
            <person name="Wheeler P.R."/>
            <person name="Parkhill J."/>
            <person name="Barrell B.G."/>
            <person name="Cole S.T."/>
            <person name="Gordon S.V."/>
            <person name="Hewinson R.G."/>
        </authorList>
    </citation>
    <scope>NUCLEOTIDE SEQUENCE [LARGE SCALE GENOMIC DNA]</scope>
    <source>
        <strain>ATCC BAA-935 / AF2122/97</strain>
    </source>
</reference>
<reference key="2">
    <citation type="journal article" date="2017" name="Genome Announc.">
        <title>Updated reference genome sequence and annotation of Mycobacterium bovis AF2122/97.</title>
        <authorList>
            <person name="Malone K.M."/>
            <person name="Farrell D."/>
            <person name="Stuber T.P."/>
            <person name="Schubert O.T."/>
            <person name="Aebersold R."/>
            <person name="Robbe-Austerman S."/>
            <person name="Gordon S.V."/>
        </authorList>
    </citation>
    <scope>NUCLEOTIDE SEQUENCE [LARGE SCALE GENOMIC DNA]</scope>
    <scope>GENOME REANNOTATION</scope>
    <source>
        <strain>ATCC BAA-935 / AF2122/97</strain>
    </source>
</reference>
<feature type="chain" id="PRO_0000103829" description="Uncharacterized protein Mb1392c">
    <location>
        <begin position="1"/>
        <end position="307"/>
    </location>
</feature>
<feature type="transmembrane region" description="Helical" evidence="1">
    <location>
        <begin position="158"/>
        <end position="178"/>
    </location>
</feature>
<feature type="transmembrane region" description="Helical" evidence="1">
    <location>
        <begin position="203"/>
        <end position="223"/>
    </location>
</feature>
<feature type="domain" description="EAL" evidence="2">
    <location>
        <begin position="54"/>
        <end position="307"/>
    </location>
</feature>
<evidence type="ECO:0000255" key="1"/>
<evidence type="ECO:0000255" key="2">
    <source>
        <dbReference type="PROSITE-ProRule" id="PRU00074"/>
    </source>
</evidence>
<evidence type="ECO:0000305" key="3"/>
<protein>
    <recommendedName>
        <fullName>Uncharacterized protein Mb1392c</fullName>
    </recommendedName>
</protein>